<keyword id="KW-0235">DNA replication</keyword>
<keyword id="KW-0238">DNA-binding</keyword>
<keyword id="KW-0240">DNA-directed RNA polymerase</keyword>
<keyword id="KW-0460">Magnesium</keyword>
<keyword id="KW-0479">Metal-binding</keyword>
<keyword id="KW-0548">Nucleotidyltransferase</keyword>
<keyword id="KW-0639">Primosome</keyword>
<keyword id="KW-1185">Reference proteome</keyword>
<keyword id="KW-0804">Transcription</keyword>
<keyword id="KW-0808">Transferase</keyword>
<keyword id="KW-0862">Zinc</keyword>
<keyword id="KW-0863">Zinc-finger</keyword>
<dbReference type="EC" id="2.7.7.101" evidence="1"/>
<dbReference type="EMBL" id="AE002098">
    <property type="protein sequence ID" value="AAF41892.1"/>
    <property type="molecule type" value="Genomic_DNA"/>
</dbReference>
<dbReference type="PIR" id="E81072">
    <property type="entry name" value="E81072"/>
</dbReference>
<dbReference type="RefSeq" id="NP_274544.1">
    <property type="nucleotide sequence ID" value="NC_003112.2"/>
</dbReference>
<dbReference type="RefSeq" id="WP_002225052.1">
    <property type="nucleotide sequence ID" value="NC_003112.2"/>
</dbReference>
<dbReference type="SMR" id="P57029"/>
<dbReference type="FunCoup" id="P57029">
    <property type="interactions" value="248"/>
</dbReference>
<dbReference type="STRING" id="122586.NMB1537"/>
<dbReference type="PaxDb" id="122586-NMB1537"/>
<dbReference type="KEGG" id="nme:NMB1537"/>
<dbReference type="PATRIC" id="fig|122586.8.peg.1948"/>
<dbReference type="HOGENOM" id="CLU_013501_5_2_4"/>
<dbReference type="InParanoid" id="P57029"/>
<dbReference type="OrthoDB" id="9803773at2"/>
<dbReference type="Proteomes" id="UP000000425">
    <property type="component" value="Chromosome"/>
</dbReference>
<dbReference type="GO" id="GO:0005737">
    <property type="term" value="C:cytoplasm"/>
    <property type="evidence" value="ECO:0000318"/>
    <property type="project" value="GO_Central"/>
</dbReference>
<dbReference type="GO" id="GO:0000428">
    <property type="term" value="C:DNA-directed RNA polymerase complex"/>
    <property type="evidence" value="ECO:0007669"/>
    <property type="project" value="UniProtKB-KW"/>
</dbReference>
<dbReference type="GO" id="GO:1990077">
    <property type="term" value="C:primosome complex"/>
    <property type="evidence" value="ECO:0007669"/>
    <property type="project" value="UniProtKB-KW"/>
</dbReference>
<dbReference type="GO" id="GO:0003677">
    <property type="term" value="F:DNA binding"/>
    <property type="evidence" value="ECO:0007669"/>
    <property type="project" value="UniProtKB-KW"/>
</dbReference>
<dbReference type="GO" id="GO:0003899">
    <property type="term" value="F:DNA-directed RNA polymerase activity"/>
    <property type="evidence" value="ECO:0007669"/>
    <property type="project" value="InterPro"/>
</dbReference>
<dbReference type="GO" id="GO:0008270">
    <property type="term" value="F:zinc ion binding"/>
    <property type="evidence" value="ECO:0007669"/>
    <property type="project" value="UniProtKB-UniRule"/>
</dbReference>
<dbReference type="GO" id="GO:0006269">
    <property type="term" value="P:DNA replication, synthesis of primer"/>
    <property type="evidence" value="ECO:0000318"/>
    <property type="project" value="GO_Central"/>
</dbReference>
<dbReference type="CDD" id="cd03364">
    <property type="entry name" value="TOPRIM_DnaG_primases"/>
    <property type="match status" value="1"/>
</dbReference>
<dbReference type="FunFam" id="3.40.1360.10:FF:000002">
    <property type="entry name" value="DNA primase"/>
    <property type="match status" value="1"/>
</dbReference>
<dbReference type="FunFam" id="3.90.580.10:FF:000001">
    <property type="entry name" value="DNA primase"/>
    <property type="match status" value="1"/>
</dbReference>
<dbReference type="FunFam" id="3.90.980.10:FF:000001">
    <property type="entry name" value="DNA primase"/>
    <property type="match status" value="1"/>
</dbReference>
<dbReference type="Gene3D" id="3.40.1360.10">
    <property type="match status" value="1"/>
</dbReference>
<dbReference type="Gene3D" id="3.90.980.10">
    <property type="entry name" value="DNA primase, catalytic core, N-terminal domain"/>
    <property type="match status" value="1"/>
</dbReference>
<dbReference type="Gene3D" id="1.10.860.10">
    <property type="entry name" value="DNAb Helicase, Chain A"/>
    <property type="match status" value="1"/>
</dbReference>
<dbReference type="Gene3D" id="1.20.50.20">
    <property type="entry name" value="DnaG, RNA polymerase domain, helical bundle"/>
    <property type="match status" value="1"/>
</dbReference>
<dbReference type="Gene3D" id="3.90.580.10">
    <property type="entry name" value="Zinc finger, CHC2-type domain"/>
    <property type="match status" value="1"/>
</dbReference>
<dbReference type="HAMAP" id="MF_00974">
    <property type="entry name" value="DNA_primase_DnaG"/>
    <property type="match status" value="1"/>
</dbReference>
<dbReference type="InterPro" id="IPR016136">
    <property type="entry name" value="DNA_helicase_N/primase_C"/>
</dbReference>
<dbReference type="InterPro" id="IPR037068">
    <property type="entry name" value="DNA_primase_core_N_sf"/>
</dbReference>
<dbReference type="InterPro" id="IPR019475">
    <property type="entry name" value="DNA_primase_DnaB-bd"/>
</dbReference>
<dbReference type="InterPro" id="IPR006295">
    <property type="entry name" value="DNA_primase_DnaG"/>
</dbReference>
<dbReference type="InterPro" id="IPR013173">
    <property type="entry name" value="DNA_primase_DnaG_DnaB-bd_dom"/>
</dbReference>
<dbReference type="InterPro" id="IPR036977">
    <property type="entry name" value="DNA_primase_Znf_CHC2"/>
</dbReference>
<dbReference type="InterPro" id="IPR030846">
    <property type="entry name" value="DnaG_bac"/>
</dbReference>
<dbReference type="InterPro" id="IPR013264">
    <property type="entry name" value="DNAG_N"/>
</dbReference>
<dbReference type="InterPro" id="IPR050219">
    <property type="entry name" value="DnaG_primase"/>
</dbReference>
<dbReference type="InterPro" id="IPR034151">
    <property type="entry name" value="TOPRIM_DnaG_bac"/>
</dbReference>
<dbReference type="InterPro" id="IPR006171">
    <property type="entry name" value="TOPRIM_dom"/>
</dbReference>
<dbReference type="InterPro" id="IPR002694">
    <property type="entry name" value="Znf_CHC2"/>
</dbReference>
<dbReference type="NCBIfam" id="TIGR01391">
    <property type="entry name" value="dnaG"/>
    <property type="match status" value="1"/>
</dbReference>
<dbReference type="PANTHER" id="PTHR30313">
    <property type="entry name" value="DNA PRIMASE"/>
    <property type="match status" value="1"/>
</dbReference>
<dbReference type="PANTHER" id="PTHR30313:SF2">
    <property type="entry name" value="DNA PRIMASE"/>
    <property type="match status" value="1"/>
</dbReference>
<dbReference type="Pfam" id="PF10410">
    <property type="entry name" value="DnaB_bind"/>
    <property type="match status" value="1"/>
</dbReference>
<dbReference type="Pfam" id="PF08278">
    <property type="entry name" value="DnaG_DnaB_bind"/>
    <property type="match status" value="1"/>
</dbReference>
<dbReference type="Pfam" id="PF08275">
    <property type="entry name" value="DNAG_N"/>
    <property type="match status" value="1"/>
</dbReference>
<dbReference type="Pfam" id="PF13155">
    <property type="entry name" value="Toprim_2"/>
    <property type="match status" value="1"/>
</dbReference>
<dbReference type="Pfam" id="PF01807">
    <property type="entry name" value="Zn_ribbon_DnaG"/>
    <property type="match status" value="1"/>
</dbReference>
<dbReference type="PIRSF" id="PIRSF002811">
    <property type="entry name" value="DnaG"/>
    <property type="match status" value="1"/>
</dbReference>
<dbReference type="SMART" id="SM00766">
    <property type="entry name" value="DnaG_DnaB_bind"/>
    <property type="match status" value="1"/>
</dbReference>
<dbReference type="SMART" id="SM00493">
    <property type="entry name" value="TOPRIM"/>
    <property type="match status" value="1"/>
</dbReference>
<dbReference type="SMART" id="SM00400">
    <property type="entry name" value="ZnF_CHCC"/>
    <property type="match status" value="1"/>
</dbReference>
<dbReference type="SUPFAM" id="SSF56731">
    <property type="entry name" value="DNA primase core"/>
    <property type="match status" value="1"/>
</dbReference>
<dbReference type="SUPFAM" id="SSF117023">
    <property type="entry name" value="DNA primase DnaG, C-terminal domain"/>
    <property type="match status" value="1"/>
</dbReference>
<dbReference type="SUPFAM" id="SSF57783">
    <property type="entry name" value="Zinc beta-ribbon"/>
    <property type="match status" value="1"/>
</dbReference>
<dbReference type="PROSITE" id="PS50880">
    <property type="entry name" value="TOPRIM"/>
    <property type="match status" value="1"/>
</dbReference>
<comment type="function">
    <text evidence="1">RNA polymerase that catalyzes the synthesis of short RNA molecules used as primers for DNA polymerase during DNA replication.</text>
</comment>
<comment type="catalytic activity">
    <reaction evidence="1">
        <text>ssDNA + n NTP = ssDNA/pppN(pN)n-1 hybrid + (n-1) diphosphate.</text>
        <dbReference type="EC" id="2.7.7.101"/>
    </reaction>
</comment>
<comment type="cofactor">
    <cofactor evidence="1">
        <name>Zn(2+)</name>
        <dbReference type="ChEBI" id="CHEBI:29105"/>
    </cofactor>
    <text evidence="1">Binds 1 zinc ion per monomer.</text>
</comment>
<comment type="cofactor">
    <cofactor evidence="1">
        <name>Mg(2+)</name>
        <dbReference type="ChEBI" id="CHEBI:18420"/>
    </cofactor>
    <text evidence="1">Binds two Mg(2+) per subunit.</text>
</comment>
<comment type="subunit">
    <text evidence="1">Monomer. Interacts with DnaB.</text>
</comment>
<comment type="domain">
    <text evidence="1">Contains an N-terminal zinc-binding domain, a central core domain that contains the primase activity, and a C-terminal DnaB-binding domain.</text>
</comment>
<comment type="similarity">
    <text evidence="1">Belongs to the DnaG primase family.</text>
</comment>
<name>DNAG_NEIMB</name>
<feature type="chain" id="PRO_0000180510" description="DNA primase">
    <location>
        <begin position="1"/>
        <end position="590"/>
    </location>
</feature>
<feature type="domain" description="Toprim" evidence="1">
    <location>
        <begin position="255"/>
        <end position="337"/>
    </location>
</feature>
<feature type="zinc finger region" description="CHC2-type" evidence="1">
    <location>
        <begin position="37"/>
        <end position="61"/>
    </location>
</feature>
<feature type="binding site" evidence="1">
    <location>
        <position position="261"/>
    </location>
    <ligand>
        <name>Mg(2+)</name>
        <dbReference type="ChEBI" id="CHEBI:18420"/>
        <label>1</label>
        <note>catalytic</note>
    </ligand>
</feature>
<feature type="binding site" evidence="1">
    <location>
        <position position="305"/>
    </location>
    <ligand>
        <name>Mg(2+)</name>
        <dbReference type="ChEBI" id="CHEBI:18420"/>
        <label>1</label>
        <note>catalytic</note>
    </ligand>
</feature>
<feature type="binding site" evidence="1">
    <location>
        <position position="305"/>
    </location>
    <ligand>
        <name>Mg(2+)</name>
        <dbReference type="ChEBI" id="CHEBI:18420"/>
        <label>2</label>
    </ligand>
</feature>
<feature type="binding site" evidence="1">
    <location>
        <position position="307"/>
    </location>
    <ligand>
        <name>Mg(2+)</name>
        <dbReference type="ChEBI" id="CHEBI:18420"/>
        <label>2</label>
    </ligand>
</feature>
<reference key="1">
    <citation type="journal article" date="2000" name="Science">
        <title>Complete genome sequence of Neisseria meningitidis serogroup B strain MC58.</title>
        <authorList>
            <person name="Tettelin H."/>
            <person name="Saunders N.J."/>
            <person name="Heidelberg J.F."/>
            <person name="Jeffries A.C."/>
            <person name="Nelson K.E."/>
            <person name="Eisen J.A."/>
            <person name="Ketchum K.A."/>
            <person name="Hood D.W."/>
            <person name="Peden J.F."/>
            <person name="Dodson R.J."/>
            <person name="Nelson W.C."/>
            <person name="Gwinn M.L."/>
            <person name="DeBoy R.T."/>
            <person name="Peterson J.D."/>
            <person name="Hickey E.K."/>
            <person name="Haft D.H."/>
            <person name="Salzberg S.L."/>
            <person name="White O."/>
            <person name="Fleischmann R.D."/>
            <person name="Dougherty B.A."/>
            <person name="Mason T.M."/>
            <person name="Ciecko A."/>
            <person name="Parksey D.S."/>
            <person name="Blair E."/>
            <person name="Cittone H."/>
            <person name="Clark E.B."/>
            <person name="Cotton M.D."/>
            <person name="Utterback T.R."/>
            <person name="Khouri H.M."/>
            <person name="Qin H."/>
            <person name="Vamathevan J.J."/>
            <person name="Gill J."/>
            <person name="Scarlato V."/>
            <person name="Masignani V."/>
            <person name="Pizza M."/>
            <person name="Grandi G."/>
            <person name="Sun L."/>
            <person name="Smith H.O."/>
            <person name="Fraser C.M."/>
            <person name="Moxon E.R."/>
            <person name="Rappuoli R."/>
            <person name="Venter J.C."/>
        </authorList>
    </citation>
    <scope>NUCLEOTIDE SEQUENCE [LARGE SCALE GENOMIC DNA]</scope>
    <source>
        <strain>ATCC BAA-335 / MC58</strain>
    </source>
</reference>
<gene>
    <name evidence="1" type="primary">dnaG</name>
    <name type="ordered locus">NMB1537</name>
</gene>
<proteinExistence type="inferred from homology"/>
<organism>
    <name type="scientific">Neisseria meningitidis serogroup B (strain ATCC BAA-335 / MC58)</name>
    <dbReference type="NCBI Taxonomy" id="122586"/>
    <lineage>
        <taxon>Bacteria</taxon>
        <taxon>Pseudomonadati</taxon>
        <taxon>Pseudomonadota</taxon>
        <taxon>Betaproteobacteria</taxon>
        <taxon>Neisseriales</taxon>
        <taxon>Neisseriaceae</taxon>
        <taxon>Neisseria</taxon>
    </lineage>
</organism>
<evidence type="ECO:0000255" key="1">
    <source>
        <dbReference type="HAMAP-Rule" id="MF_00974"/>
    </source>
</evidence>
<accession>P57029</accession>
<protein>
    <recommendedName>
        <fullName evidence="1">DNA primase</fullName>
        <ecNumber evidence="1">2.7.7.101</ecNumber>
    </recommendedName>
</protein>
<sequence length="590" mass="65915">MIPSDFIDELLAKTDIVDIIDEQVPLKKGGANYMACCPFHKEKTPSFSVSPTKQFYHCFSCGAHGSAIGFVMEHQGLSFPEAVQFLADRVGMVVPKVHGQNDNPEVRAERKKKQQTLEETTAAAADFYAQQLKFNPAAKAYLDKRGLSAEVIAHYGLGYAPDGWQPLTQVFQPYPNTALVDTGMVIDNEGRHYDRFRHRIMFPIRNPRGQVIGFGGRVLDDSKPKYLNSPDTPLFDKGKNLYGLYEGRAAVKEAGRILVVEGYMDVVALAQFGVGYGVAALGTATTAEHVKILMRQADSIYFCFDGDSAGRKAAWRALENALPQLKDDKSLHFLFLPEEHDPDSYIRAYGKAQFEDALLNQSKPLSEYFWEHLSDGIHLNTQEGKAELVKTSSPLLAQITAPALAYLLKQRLSELVGIDPDNLAQLLGQEAPKRHVKQKNYKLPPISVKQPVMLTLVQRQIRSLLINPDWAAYIDLPDYLALDGDFACLANLAESIKNHAAVPETAQVLEYMRGSPYEETITRIFHSTHQSEEMNSSSEEDCENFQIGMKKLLNELKYSQIETLKQKSLQSGLNESEKKLLLSLLTAKQN</sequence>